<organism>
    <name type="scientific">Xenopus laevis</name>
    <name type="common">African clawed frog</name>
    <dbReference type="NCBI Taxonomy" id="8355"/>
    <lineage>
        <taxon>Eukaryota</taxon>
        <taxon>Metazoa</taxon>
        <taxon>Chordata</taxon>
        <taxon>Craniata</taxon>
        <taxon>Vertebrata</taxon>
        <taxon>Euteleostomi</taxon>
        <taxon>Amphibia</taxon>
        <taxon>Batrachia</taxon>
        <taxon>Anura</taxon>
        <taxon>Pipoidea</taxon>
        <taxon>Pipidae</taxon>
        <taxon>Xenopodinae</taxon>
        <taxon>Xenopus</taxon>
        <taxon>Xenopus</taxon>
    </lineage>
</organism>
<sequence length="1388" mass="159141">MPPGTKGDPSNVTQPLPCLPSAEEDAIKVFVRIRPPVEGTLTGVDGEQGLCLTALSSTTIRLHSKPEPKMFTFDHVANVDTNQESVFSSVAKNIVESCMNGYNGTIFAYGQTGSGKTFTMLGPSESDNFTHNLRGVIPRSFEYLFFLINREKEKAGEGKSFLCKCSFIEIYNEQIFDLLDSASAGLFLREHIKKGVFVVGAVEQVVTSAAEAYQVLSMGWRNRRVASTSMNRESSRSHAVFTVTIESMEKTNDLVNIRSSQLNLVDLAGSERQKDTQTEGVRLKEAGSINRSLSCLGQVITALVDVANGRQRHICYRDSKLTFLLRDSLGGNAKTFYIANVHPGSKCFGETLSTLQFAQRAKLIKNKAVVNEDTQGNVSQLQAEVKKLKEQLSQLLSGQMPGDISVARVPSVGDNNMDYMNNFIEAMMILEKSDREKKVLLQKVVQLEDLCNKKEKFIQSNKMIVKFREDHISRLEKAHKEGRISLSNNEQDDFIAELKEEIRTLKEQVEHHPRVAKYALENHSLREENKRLHSLQSVKRAQEVTAQMIAELEKAFLEVSVSEKDRQVAPMHSTPIQLDNNSLMSAARMRERMLQLESELATSKQEYEEFKELTKKKQVEQESELQSLIKSNQHLENILEAIKANKRHEVSQLNRMHAAETIKNMTTPTKSYNLRSRLVPRLSPDAMPNGLMDTPKSGDVMDDIINEPIPPEMSEQAYEAIAEELRIVQEQVTALQAKLDEEEGKNIRLQQQVNKLELCSTQIQELFNSERSNWNKEQQDLIAQIKSLEKQKQENKSQEDVLKSEVHDLRVVLQSADRELGAVKGEYSLYREKQEKELSQLSARHMDVQLQLDNVRLEHETLLEEKRSLQDAFDNLEEVMKFEIDQLKQEISDSKHENETLRAEFSNLLELLETEKERRQKLTSQLEEDKENKTKELLQVVDENMHLRKQCSELMTKCEQQVTELHGLEHSLTSSKEMIADLEKKNTADKEVVADLMNQIQVHRTTIIHKTESIDLLTRELEDIHSKYSIVLLAKEESKTVIEEQEKQIEELRECLERKQSADNIEKELLCDDLAHATEELEKLTEAFNKQEALLHTHEKELVEKEQQISELTNQVKLMTDLEISREQEKIRPASSNSSSPVVLPETPRTPEGNPYDSEIANLQKRNTNLEILVSELNEERTSKNEEIIRLKMQLCETENMRLEIQNLQGMCKELKSQLENCNNVMKDSNDQKPSDMQDLKREIEKEVSERMEKGKATEHILKLQAELEETRNILCTKDHSLNELSKEIERTRSLEAKAFTEKEEIRSILEGKYEETEKLSHELDMLRKQVLFLAEENGKILGHQNPNQKIQYLVKLKKENNKLLEEAEKLRIENLFLKESKKCEHCN</sequence>
<name>KI15A_XENLA</name>
<comment type="function">
    <text evidence="6">Plus-end directed kinesin-like motor enzyme involved in mitotic spindle assembly. Required for centrosome separation and maintenance of spindle bipolarity during mitosis.</text>
</comment>
<comment type="subunit">
    <text evidence="5 7">Homodimer. Dimerization is required for targeting to microtubule minus ends. Found in a complex with tpx2 and microtubules. Its association with microtubules and targeting to microtubule minus ends requires tpx2.</text>
</comment>
<comment type="subcellular location">
    <subcellularLocation>
        <location>Cytoplasm</location>
    </subcellularLocation>
    <subcellularLocation>
        <location>Cytoplasm</location>
        <location>Cytoskeleton</location>
        <location>Microtubule organizing center</location>
        <location>Centrosome</location>
    </subcellularLocation>
    <subcellularLocation>
        <location>Cytoplasm</location>
        <location>Cytoskeleton</location>
        <location>Spindle</location>
    </subcellularLocation>
    <subcellularLocation>
        <location>Cytoplasm</location>
        <location>Cytoskeleton</location>
        <location>Spindle pole</location>
    </subcellularLocation>
    <text evidence="6">Localizes during metaphase on spindle microtubules, with a strong enrichment at spindle poles. Localizes to the minus ends of spindle pole and aster microtubules in a dynein- and dynactin-dependent manner. Detected diffusively in the cytoplasm. Localized (PubMed:8548825) at the centrosome during the interphase and throughout mitosis.</text>
</comment>
<comment type="tissue specificity">
    <text evidence="6">Strongly expressed in testis and weakly in lung (at protein level).</text>
</comment>
<comment type="developmental stage">
    <text evidence="6">Expressed maternally in oocytes and eggs (at protein level).</text>
</comment>
<comment type="similarity">
    <text evidence="3">Belongs to the TRAFAC class myosin-kinesin ATPase superfamily. Kinesin family. KLP2 subfamily.</text>
</comment>
<keyword id="KW-0067">ATP-binding</keyword>
<keyword id="KW-0175">Coiled coil</keyword>
<keyword id="KW-0963">Cytoplasm</keyword>
<keyword id="KW-0206">Cytoskeleton</keyword>
<keyword id="KW-0493">Microtubule</keyword>
<keyword id="KW-0505">Motor protein</keyword>
<keyword id="KW-0547">Nucleotide-binding</keyword>
<keyword id="KW-1185">Reference proteome</keyword>
<accession>Q91785</accession>
<protein>
    <recommendedName>
        <fullName>Kinesin-like protein KIF15-A</fullName>
    </recommendedName>
    <alternativeName>
        <fullName>Kinesin-like protein 2-A</fullName>
        <shortName>Xklp2-A</shortName>
    </alternativeName>
</protein>
<dbReference type="EMBL" id="X94082">
    <property type="protein sequence ID" value="CAA63826.1"/>
    <property type="molecule type" value="mRNA"/>
</dbReference>
<dbReference type="PIR" id="T30335">
    <property type="entry name" value="T30335"/>
</dbReference>
<dbReference type="RefSeq" id="NP_001081543.1">
    <property type="nucleotide sequence ID" value="NM_001088074.1"/>
</dbReference>
<dbReference type="SMR" id="Q91785"/>
<dbReference type="BioGRID" id="99246">
    <property type="interactions" value="1"/>
</dbReference>
<dbReference type="GeneID" id="397909"/>
<dbReference type="KEGG" id="xla:397909"/>
<dbReference type="AGR" id="Xenbase:XB-GENE-1005657"/>
<dbReference type="CTD" id="397909"/>
<dbReference type="OrthoDB" id="3176171at2759"/>
<dbReference type="Proteomes" id="UP000186698">
    <property type="component" value="Chromosome 6L"/>
</dbReference>
<dbReference type="Bgee" id="397909">
    <property type="expression patterns" value="Expressed in spleen and 9 other cell types or tissues"/>
</dbReference>
<dbReference type="GO" id="GO:0005813">
    <property type="term" value="C:centrosome"/>
    <property type="evidence" value="ECO:0000314"/>
    <property type="project" value="UniProtKB"/>
</dbReference>
<dbReference type="GO" id="GO:0005737">
    <property type="term" value="C:cytoplasm"/>
    <property type="evidence" value="ECO:0000314"/>
    <property type="project" value="UniProtKB"/>
</dbReference>
<dbReference type="GO" id="GO:0005829">
    <property type="term" value="C:cytosol"/>
    <property type="evidence" value="ECO:0000304"/>
    <property type="project" value="Reactome"/>
</dbReference>
<dbReference type="GO" id="GO:0005874">
    <property type="term" value="C:microtubule"/>
    <property type="evidence" value="ECO:0007669"/>
    <property type="project" value="UniProtKB-KW"/>
</dbReference>
<dbReference type="GO" id="GO:0000922">
    <property type="term" value="C:spindle pole"/>
    <property type="evidence" value="ECO:0000314"/>
    <property type="project" value="UniProtKB"/>
</dbReference>
<dbReference type="GO" id="GO:0005524">
    <property type="term" value="F:ATP binding"/>
    <property type="evidence" value="ECO:0007669"/>
    <property type="project" value="UniProtKB-KW"/>
</dbReference>
<dbReference type="GO" id="GO:0008017">
    <property type="term" value="F:microtubule binding"/>
    <property type="evidence" value="ECO:0000314"/>
    <property type="project" value="UniProtKB"/>
</dbReference>
<dbReference type="GO" id="GO:0008574">
    <property type="term" value="F:plus-end-directed microtubule motor activity"/>
    <property type="evidence" value="ECO:0000314"/>
    <property type="project" value="UniProtKB"/>
</dbReference>
<dbReference type="GO" id="GO:0051299">
    <property type="term" value="P:centrosome separation"/>
    <property type="evidence" value="ECO:0000315"/>
    <property type="project" value="UniProtKB"/>
</dbReference>
<dbReference type="GO" id="GO:0007018">
    <property type="term" value="P:microtubule-based movement"/>
    <property type="evidence" value="ECO:0007669"/>
    <property type="project" value="InterPro"/>
</dbReference>
<dbReference type="GO" id="GO:0090307">
    <property type="term" value="P:mitotic spindle assembly"/>
    <property type="evidence" value="ECO:0000315"/>
    <property type="project" value="UniProtKB"/>
</dbReference>
<dbReference type="CDD" id="cd01373">
    <property type="entry name" value="KISc_KLP2_like"/>
    <property type="match status" value="1"/>
</dbReference>
<dbReference type="FunFam" id="3.40.850.10:FF:000034">
    <property type="entry name" value="Kinesin family member 15"/>
    <property type="match status" value="1"/>
</dbReference>
<dbReference type="Gene3D" id="3.40.850.10">
    <property type="entry name" value="Kinesin motor domain"/>
    <property type="match status" value="1"/>
</dbReference>
<dbReference type="InterPro" id="IPR031794">
    <property type="entry name" value="HMMR_C"/>
</dbReference>
<dbReference type="InterPro" id="IPR044986">
    <property type="entry name" value="KIF15/KIN-12"/>
</dbReference>
<dbReference type="InterPro" id="IPR019821">
    <property type="entry name" value="Kinesin_motor_CS"/>
</dbReference>
<dbReference type="InterPro" id="IPR001752">
    <property type="entry name" value="Kinesin_motor_dom"/>
</dbReference>
<dbReference type="InterPro" id="IPR036961">
    <property type="entry name" value="Kinesin_motor_dom_sf"/>
</dbReference>
<dbReference type="InterPro" id="IPR027417">
    <property type="entry name" value="P-loop_NTPase"/>
</dbReference>
<dbReference type="PANTHER" id="PTHR37739">
    <property type="entry name" value="KINESIN-LIKE PROTEIN KIN-12D"/>
    <property type="match status" value="1"/>
</dbReference>
<dbReference type="PANTHER" id="PTHR37739:SF8">
    <property type="entry name" value="KINESIN-LIKE PROTEIN KIN-12D"/>
    <property type="match status" value="1"/>
</dbReference>
<dbReference type="Pfam" id="PF15908">
    <property type="entry name" value="HMMR_C"/>
    <property type="match status" value="1"/>
</dbReference>
<dbReference type="Pfam" id="PF00225">
    <property type="entry name" value="Kinesin"/>
    <property type="match status" value="1"/>
</dbReference>
<dbReference type="PRINTS" id="PR00380">
    <property type="entry name" value="KINESINHEAVY"/>
</dbReference>
<dbReference type="SMART" id="SM00129">
    <property type="entry name" value="KISc"/>
    <property type="match status" value="1"/>
</dbReference>
<dbReference type="SUPFAM" id="SSF52540">
    <property type="entry name" value="P-loop containing nucleoside triphosphate hydrolases"/>
    <property type="match status" value="1"/>
</dbReference>
<dbReference type="PROSITE" id="PS00411">
    <property type="entry name" value="KINESIN_MOTOR_1"/>
    <property type="match status" value="1"/>
</dbReference>
<dbReference type="PROSITE" id="PS50067">
    <property type="entry name" value="KINESIN_MOTOR_2"/>
    <property type="match status" value="1"/>
</dbReference>
<evidence type="ECO:0000250" key="1"/>
<evidence type="ECO:0000255" key="2"/>
<evidence type="ECO:0000255" key="3">
    <source>
        <dbReference type="PROSITE-ProRule" id="PRU00283"/>
    </source>
</evidence>
<evidence type="ECO:0000256" key="4">
    <source>
        <dbReference type="SAM" id="MobiDB-lite"/>
    </source>
</evidence>
<evidence type="ECO:0000269" key="5">
    <source>
    </source>
</evidence>
<evidence type="ECO:0000269" key="6">
    <source>
    </source>
</evidence>
<evidence type="ECO:0000269" key="7">
    <source>
    </source>
</evidence>
<gene>
    <name type="primary">kif15-a</name>
    <name type="synonym">klp2</name>
</gene>
<feature type="chain" id="PRO_0000328688" description="Kinesin-like protein KIF15-A">
    <location>
        <begin position="1"/>
        <end position="1388"/>
    </location>
</feature>
<feature type="domain" description="Kinesin motor" evidence="3">
    <location>
        <begin position="26"/>
        <end position="364"/>
    </location>
</feature>
<feature type="region of interest" description="Disordered" evidence="4">
    <location>
        <begin position="1127"/>
        <end position="1156"/>
    </location>
</feature>
<feature type="region of interest" description="Necessary for its targeting to microtubule minus ends" evidence="1">
    <location>
        <begin position="1139"/>
        <end position="1388"/>
    </location>
</feature>
<feature type="coiled-coil region" evidence="2">
    <location>
        <begin position="369"/>
        <end position="1383"/>
    </location>
</feature>
<feature type="binding site" evidence="3">
    <location>
        <begin position="110"/>
        <end position="117"/>
    </location>
    <ligand>
        <name>ATP</name>
        <dbReference type="ChEBI" id="CHEBI:30616"/>
    </ligand>
</feature>
<feature type="mutagenesis site" description="Inhibits its targeting to microtubule minus ends." evidence="7">
    <original>L</original>
    <variation>K</variation>
    <location>
        <position position="1371"/>
    </location>
</feature>
<proteinExistence type="evidence at protein level"/>
<reference key="1">
    <citation type="journal article" date="1996" name="Cell">
        <title>Xklp2, a novel Xenopus centrosomal kinesin-like protein required for centrosome separation during mitosis.</title>
        <authorList>
            <person name="Boleti H."/>
            <person name="Karsenti E."/>
            <person name="Vernos I."/>
        </authorList>
    </citation>
    <scope>NUCLEOTIDE SEQUENCE [MRNA]</scope>
    <scope>FUNCTION</scope>
    <scope>SUBCELLULAR LOCATION</scope>
    <scope>TISSUE SPECIFICITY</scope>
    <scope>DEVELOPMENTAL STAGE</scope>
    <source>
        <tissue>Oocyte</tissue>
    </source>
</reference>
<reference key="2">
    <citation type="journal article" date="1998" name="J. Cell Biol.">
        <title>Localization of the kinesin-like protein Xklp2 to spindle poles requires a leucine zipper, a microtubule-associated protein, and dynein.</title>
        <authorList>
            <person name="Wittmann T."/>
            <person name="Boleti H."/>
            <person name="Antony C."/>
            <person name="Karsenti E."/>
            <person name="Vernos I."/>
        </authorList>
    </citation>
    <scope>HOMODIMER</scope>
    <scope>IDENTIFICATION IN A COMPLEX WITH TPX2 AND MICROTUBULES</scope>
    <scope>MUTAGENESIS OF LEU-1371</scope>
    <scope>SUBCELLULAR LOCATION</scope>
</reference>
<reference key="3">
    <citation type="journal article" date="2000" name="J. Cell Biol.">
        <title>TPX2, a novel Xenopus MAP involved in spindle pole organization.</title>
        <authorList>
            <person name="Wittmann T."/>
            <person name="Wilm M."/>
            <person name="Karsenti E."/>
            <person name="Vernos I."/>
        </authorList>
    </citation>
    <scope>IDENTIFICATION IN A COMPLEX WITH TPX2 AND MICROTUBULES</scope>
    <scope>SUBCELLULAR LOCATION</scope>
</reference>